<accession>Q5XC12</accession>
<accession>P82572</accession>
<dbReference type="EC" id="6.3.4.3"/>
<dbReference type="EMBL" id="CP000003">
    <property type="protein sequence ID" value="AAT87051.1"/>
    <property type="molecule type" value="Genomic_DNA"/>
</dbReference>
<dbReference type="RefSeq" id="WP_002989724.1">
    <property type="nucleotide sequence ID" value="NC_006086.1"/>
</dbReference>
<dbReference type="SMR" id="Q5XC12"/>
<dbReference type="KEGG" id="spa:M6_Spy0916"/>
<dbReference type="HOGENOM" id="CLU_003601_3_3_9"/>
<dbReference type="UniPathway" id="UPA00193"/>
<dbReference type="Proteomes" id="UP000001167">
    <property type="component" value="Chromosome"/>
</dbReference>
<dbReference type="GO" id="GO:0005524">
    <property type="term" value="F:ATP binding"/>
    <property type="evidence" value="ECO:0007669"/>
    <property type="project" value="UniProtKB-UniRule"/>
</dbReference>
<dbReference type="GO" id="GO:0004329">
    <property type="term" value="F:formate-tetrahydrofolate ligase activity"/>
    <property type="evidence" value="ECO:0007669"/>
    <property type="project" value="UniProtKB-UniRule"/>
</dbReference>
<dbReference type="GO" id="GO:0035999">
    <property type="term" value="P:tetrahydrofolate interconversion"/>
    <property type="evidence" value="ECO:0007669"/>
    <property type="project" value="UniProtKB-UniRule"/>
</dbReference>
<dbReference type="CDD" id="cd00477">
    <property type="entry name" value="FTHFS"/>
    <property type="match status" value="1"/>
</dbReference>
<dbReference type="FunFam" id="3.30.1510.10:FF:000001">
    <property type="entry name" value="Formate--tetrahydrofolate ligase"/>
    <property type="match status" value="1"/>
</dbReference>
<dbReference type="FunFam" id="3.10.410.10:FF:000001">
    <property type="entry name" value="Putative formate--tetrahydrofolate ligase"/>
    <property type="match status" value="1"/>
</dbReference>
<dbReference type="Gene3D" id="3.30.1510.10">
    <property type="entry name" value="Domain 2, N(10)-formyltetrahydrofolate synthetase"/>
    <property type="match status" value="1"/>
</dbReference>
<dbReference type="Gene3D" id="3.10.410.10">
    <property type="entry name" value="Formyltetrahydrofolate synthetase, domain 3"/>
    <property type="match status" value="1"/>
</dbReference>
<dbReference type="Gene3D" id="3.40.50.300">
    <property type="entry name" value="P-loop containing nucleotide triphosphate hydrolases"/>
    <property type="match status" value="1"/>
</dbReference>
<dbReference type="HAMAP" id="MF_01543">
    <property type="entry name" value="FTHFS"/>
    <property type="match status" value="1"/>
</dbReference>
<dbReference type="InterPro" id="IPR000559">
    <property type="entry name" value="Formate_THF_ligase"/>
</dbReference>
<dbReference type="InterPro" id="IPR020628">
    <property type="entry name" value="Formate_THF_ligase_CS"/>
</dbReference>
<dbReference type="InterPro" id="IPR027417">
    <property type="entry name" value="P-loop_NTPase"/>
</dbReference>
<dbReference type="NCBIfam" id="NF010030">
    <property type="entry name" value="PRK13505.1"/>
    <property type="match status" value="1"/>
</dbReference>
<dbReference type="Pfam" id="PF01268">
    <property type="entry name" value="FTHFS"/>
    <property type="match status" value="1"/>
</dbReference>
<dbReference type="SUPFAM" id="SSF52540">
    <property type="entry name" value="P-loop containing nucleoside triphosphate hydrolases"/>
    <property type="match status" value="1"/>
</dbReference>
<dbReference type="PROSITE" id="PS00721">
    <property type="entry name" value="FTHFS_1"/>
    <property type="match status" value="1"/>
</dbReference>
<dbReference type="PROSITE" id="PS00722">
    <property type="entry name" value="FTHFS_2"/>
    <property type="match status" value="1"/>
</dbReference>
<reference key="1">
    <citation type="journal article" date="2004" name="J. Infect. Dis.">
        <title>Progress toward characterization of the group A Streptococcus metagenome: complete genome sequence of a macrolide-resistant serotype M6 strain.</title>
        <authorList>
            <person name="Banks D.J."/>
            <person name="Porcella S.F."/>
            <person name="Barbian K.D."/>
            <person name="Beres S.B."/>
            <person name="Philips L.E."/>
            <person name="Voyich J.M."/>
            <person name="DeLeo F.R."/>
            <person name="Martin J.M."/>
            <person name="Somerville G.A."/>
            <person name="Musser J.M."/>
        </authorList>
    </citation>
    <scope>NUCLEOTIDE SEQUENCE [LARGE SCALE GENOMIC DNA]</scope>
    <source>
        <strain>ATCC BAA-946 / MGAS10394</strain>
    </source>
</reference>
<reference key="2">
    <citation type="submission" date="2000-05" db="UniProtKB">
        <title>Two-dimensional gel electrophoresis map of Streptococcus pyogenes proteins.</title>
        <authorList>
            <person name="Hogan D.A."/>
            <person name="Du P."/>
            <person name="Stevenson T.I."/>
            <person name="Whitton M."/>
            <person name="Kilby G.W."/>
            <person name="Rogers J."/>
            <person name="VanBogelen R.A."/>
        </authorList>
    </citation>
    <scope>PROTEIN SEQUENCE OF 3-20; 22-33; 54-87; 176-190; 321-331 AND 436-459</scope>
    <scope>MASS SPECTROMETRY</scope>
    <source>
        <strain>JRS4 / Serotype M6</strain>
    </source>
</reference>
<protein>
    <recommendedName>
        <fullName>Formate--tetrahydrofolate ligase 1</fullName>
        <ecNumber>6.3.4.3</ecNumber>
    </recommendedName>
    <alternativeName>
        <fullName>Formyltetrahydrofolate synthetase 1</fullName>
        <shortName>FHS 1</shortName>
        <shortName>FTHFS 1</shortName>
    </alternativeName>
</protein>
<keyword id="KW-0067">ATP-binding</keyword>
<keyword id="KW-0903">Direct protein sequencing</keyword>
<keyword id="KW-0436">Ligase</keyword>
<keyword id="KW-0547">Nucleotide-binding</keyword>
<keyword id="KW-0554">One-carbon metabolism</keyword>
<comment type="catalytic activity">
    <reaction>
        <text>(6S)-5,6,7,8-tetrahydrofolate + formate + ATP = (6R)-10-formyltetrahydrofolate + ADP + phosphate</text>
        <dbReference type="Rhea" id="RHEA:20221"/>
        <dbReference type="ChEBI" id="CHEBI:15740"/>
        <dbReference type="ChEBI" id="CHEBI:30616"/>
        <dbReference type="ChEBI" id="CHEBI:43474"/>
        <dbReference type="ChEBI" id="CHEBI:57453"/>
        <dbReference type="ChEBI" id="CHEBI:195366"/>
        <dbReference type="ChEBI" id="CHEBI:456216"/>
        <dbReference type="EC" id="6.3.4.3"/>
    </reaction>
</comment>
<comment type="pathway">
    <text>One-carbon metabolism; tetrahydrofolate interconversion.</text>
</comment>
<comment type="mass spectrometry"/>
<comment type="similarity">
    <text evidence="3">Belongs to the formate--tetrahydrofolate ligase family.</text>
</comment>
<name>FTHS1_STRP6</name>
<organism>
    <name type="scientific">Streptococcus pyogenes serotype M6 (strain ATCC BAA-946 / MGAS10394)</name>
    <dbReference type="NCBI Taxonomy" id="286636"/>
    <lineage>
        <taxon>Bacteria</taxon>
        <taxon>Bacillati</taxon>
        <taxon>Bacillota</taxon>
        <taxon>Bacilli</taxon>
        <taxon>Lactobacillales</taxon>
        <taxon>Streptococcaceae</taxon>
        <taxon>Streptococcus</taxon>
    </lineage>
</organism>
<proteinExistence type="evidence at protein level"/>
<gene>
    <name type="primary">fhs1</name>
    <name type="synonym">fhs</name>
    <name type="synonym">fthS</name>
    <name type="ordered locus">M6_Spy0916</name>
</gene>
<sequence>MKSDIEIAQSVALQPITDIVKKVGIDGDDIELYGKYKAKLSFEKMKAVEANEPGKLILVTAINPTPAGEGKSTMSIGLADALNQMGKKTMLALREPSLGPVMGIKGGAAGGGYAQVLPMEDINLHFTGDMHAITTANNALSALIDNHLQQGNDLGIDPRRIIWKRVLDLNDRALRQVIVGLGSPVNGVPREDGFDITVASEIMAILCLATDLKDLKKRLADIVVAYTYDRKPVYVRDLKVEGALTLILKDAIKPNLVQTIYGTPALIHGGPFANIAHGCNSVLATSTALRLADYTVTEAGFGADLGAEKFLNIKVPNLPKAPDAIVIVATLRALKMHGGVAKSDLAAENCEAVRLGFANLKRHVENMRQFKVPVVVAINEFVADTEAEIATLKALCEEIKVPVELASVWANGAEGGLALAKTVVRVIDQEAADYKRLYSDEDTLEEKVINIVTQIYGGKAVQFGPKAKTQLKQFAEFGWDKLPVCMAKTQYSFSDNPSLLGAPTDFDITIREFVPKTGAGFIVGLTGDVMTMPGLPKVPAAMAMDVAENGTALGLF</sequence>
<feature type="chain" id="PRO_0000199397" description="Formate--tetrahydrofolate ligase 1">
    <location>
        <begin position="1"/>
        <end position="556"/>
    </location>
</feature>
<feature type="binding site" evidence="1">
    <location>
        <begin position="65"/>
        <end position="72"/>
    </location>
    <ligand>
        <name>ATP</name>
        <dbReference type="ChEBI" id="CHEBI:30616"/>
    </ligand>
</feature>
<evidence type="ECO:0000250" key="1"/>
<evidence type="ECO:0000269" key="2">
    <source ref="2"/>
</evidence>
<evidence type="ECO:0000305" key="3"/>